<reference key="1">
    <citation type="journal article" date="2007" name="Nature">
        <title>Evolution of genes and genomes on the Drosophila phylogeny.</title>
        <authorList>
            <consortium name="Drosophila 12 genomes consortium"/>
        </authorList>
    </citation>
    <scope>NUCLEOTIDE SEQUENCE [LARGE SCALE GENOMIC DNA]</scope>
    <source>
        <strain>Tucson 14024-0371.13</strain>
    </source>
</reference>
<keyword id="KW-0067">ATP-binding</keyword>
<keyword id="KW-0963">Cytoplasm</keyword>
<keyword id="KW-0418">Kinase</keyword>
<keyword id="KW-0496">Mitochondrion</keyword>
<keyword id="KW-0547">Nucleotide-binding</keyword>
<keyword id="KW-0597">Phosphoprotein</keyword>
<keyword id="KW-1185">Reference proteome</keyword>
<keyword id="KW-0808">Transferase</keyword>
<comment type="function">
    <text evidence="2">Catalyzes the reversible transfer of the terminal phosphate group between ATP and AMP. Plays an important role in cellular energy homeostasis and in adenine nucleotide metabolism. Adenylate kinase activity is critical for regulation of the phosphate utilization and the AMP de novo biosynthesis pathways.</text>
</comment>
<comment type="catalytic activity">
    <reaction evidence="2">
        <text>AMP + ATP = 2 ADP</text>
        <dbReference type="Rhea" id="RHEA:12973"/>
        <dbReference type="ChEBI" id="CHEBI:30616"/>
        <dbReference type="ChEBI" id="CHEBI:456215"/>
        <dbReference type="ChEBI" id="CHEBI:456216"/>
        <dbReference type="EC" id="2.7.4.3"/>
    </reaction>
</comment>
<comment type="subunit">
    <text evidence="2">Monomer.</text>
</comment>
<comment type="subcellular location">
    <subcellularLocation>
        <location evidence="2">Cytoplasm</location>
        <location evidence="2">Cytosol</location>
    </subcellularLocation>
    <subcellularLocation>
        <location evidence="2">Mitochondrion intermembrane space</location>
    </subcellularLocation>
    <text evidence="2">Predominantly mitochondrial.</text>
</comment>
<comment type="domain">
    <text evidence="2">Consists of three domains, a large central CORE domain and two small peripheral domains, NMPbind and LID, which undergo movements during catalysis. The LID domain closes over the site of phosphoryl transfer upon ATP binding. Assembling and dissambling the active center during each catalytic cycle provides an effective means to prevent ATP hydrolysis.</text>
</comment>
<comment type="similarity">
    <text evidence="2">Belongs to the adenylate kinase family. AK2 subfamily.</text>
</comment>
<sequence length="240" mass="26602">MAPTAAVPVERYEPERIGINAILLGPPGSGKGTQAPLLKEKFCVCHLSTGDMLRAEISSGSKLGAELKKVMDAGKLVSDDLVVDMIDSNLDKPECKNGFLLDGFPRTVVQAEKLDTLLDKRKANLDAVIEFAIDDSLLVRRITGRLIHQASGRSYHEEFAPPKKPMTDDVTGEPLMRRSDDNAEALKKRLEAYHKQTRPLVDYYGLRGLHFKVDAAKKSSDVFSTIDTIFQRQRPAKIQL</sequence>
<proteinExistence type="inferred from homology"/>
<feature type="chain" id="PRO_0000365703" description="Adenylate kinase">
    <location>
        <begin position="1"/>
        <end position="240"/>
    </location>
</feature>
<feature type="region of interest" description="NMP" evidence="2">
    <location>
        <begin position="48"/>
        <end position="77"/>
    </location>
</feature>
<feature type="region of interest" description="LID" evidence="2">
    <location>
        <begin position="144"/>
        <end position="181"/>
    </location>
</feature>
<feature type="binding site" evidence="2">
    <location>
        <begin position="28"/>
        <end position="33"/>
    </location>
    <ligand>
        <name>ATP</name>
        <dbReference type="ChEBI" id="CHEBI:30616"/>
    </ligand>
</feature>
<feature type="binding site" evidence="2">
    <location>
        <position position="49"/>
    </location>
    <ligand>
        <name>AMP</name>
        <dbReference type="ChEBI" id="CHEBI:456215"/>
    </ligand>
</feature>
<feature type="binding site" evidence="2">
    <location>
        <position position="54"/>
    </location>
    <ligand>
        <name>AMP</name>
        <dbReference type="ChEBI" id="CHEBI:456215"/>
    </ligand>
</feature>
<feature type="binding site" evidence="2">
    <location>
        <begin position="75"/>
        <end position="77"/>
    </location>
    <ligand>
        <name>AMP</name>
        <dbReference type="ChEBI" id="CHEBI:456215"/>
    </ligand>
</feature>
<feature type="binding site" evidence="2">
    <location>
        <begin position="103"/>
        <end position="106"/>
    </location>
    <ligand>
        <name>AMP</name>
        <dbReference type="ChEBI" id="CHEBI:456215"/>
    </ligand>
</feature>
<feature type="binding site" evidence="2">
    <location>
        <position position="110"/>
    </location>
    <ligand>
        <name>AMP</name>
        <dbReference type="ChEBI" id="CHEBI:456215"/>
    </ligand>
</feature>
<feature type="binding site" evidence="2">
    <location>
        <position position="145"/>
    </location>
    <ligand>
        <name>ATP</name>
        <dbReference type="ChEBI" id="CHEBI:30616"/>
    </ligand>
</feature>
<feature type="binding site" evidence="2">
    <location>
        <begin position="154"/>
        <end position="155"/>
    </location>
    <ligand>
        <name>ATP</name>
        <dbReference type="ChEBI" id="CHEBI:30616"/>
    </ligand>
</feature>
<feature type="binding site" evidence="2">
    <location>
        <position position="178"/>
    </location>
    <ligand>
        <name>AMP</name>
        <dbReference type="ChEBI" id="CHEBI:456215"/>
    </ligand>
</feature>
<feature type="binding site" evidence="2">
    <location>
        <position position="189"/>
    </location>
    <ligand>
        <name>AMP</name>
        <dbReference type="ChEBI" id="CHEBI:456215"/>
    </ligand>
</feature>
<feature type="binding site" evidence="2">
    <location>
        <position position="217"/>
    </location>
    <ligand>
        <name>ATP</name>
        <dbReference type="ChEBI" id="CHEBI:30616"/>
    </ligand>
</feature>
<feature type="modified residue" description="Phosphoserine" evidence="1">
    <location>
        <position position="48"/>
    </location>
</feature>
<name>KAD2_DROAN</name>
<dbReference type="EC" id="2.7.4.3" evidence="2"/>
<dbReference type="EMBL" id="CH902619">
    <property type="protein sequence ID" value="EDV36289.1"/>
    <property type="molecule type" value="Genomic_DNA"/>
</dbReference>
<dbReference type="SMR" id="B3MCQ5"/>
<dbReference type="FunCoup" id="B3MCQ5">
    <property type="interactions" value="1623"/>
</dbReference>
<dbReference type="STRING" id="7217.B3MCQ5"/>
<dbReference type="EnsemblMetazoa" id="FBtr0117591">
    <property type="protein sequence ID" value="FBpp0116083"/>
    <property type="gene ID" value="FBgn0089925"/>
</dbReference>
<dbReference type="EnsemblMetazoa" id="XM_001959431.4">
    <property type="protein sequence ID" value="XP_001959467.1"/>
    <property type="gene ID" value="LOC6495737"/>
</dbReference>
<dbReference type="GeneID" id="6495737"/>
<dbReference type="KEGG" id="dan:6495737"/>
<dbReference type="CTD" id="204"/>
<dbReference type="eggNOG" id="KOG3078">
    <property type="taxonomic scope" value="Eukaryota"/>
</dbReference>
<dbReference type="HOGENOM" id="CLU_032354_1_0_1"/>
<dbReference type="InParanoid" id="B3MCQ5"/>
<dbReference type="OMA" id="HYKVDAA"/>
<dbReference type="OrthoDB" id="439792at2759"/>
<dbReference type="PhylomeDB" id="B3MCQ5"/>
<dbReference type="Proteomes" id="UP000007801">
    <property type="component" value="Unassembled WGS sequence"/>
</dbReference>
<dbReference type="GO" id="GO:0005829">
    <property type="term" value="C:cytosol"/>
    <property type="evidence" value="ECO:0007669"/>
    <property type="project" value="UniProtKB-SubCell"/>
</dbReference>
<dbReference type="GO" id="GO:0005758">
    <property type="term" value="C:mitochondrial intermembrane space"/>
    <property type="evidence" value="ECO:0007669"/>
    <property type="project" value="UniProtKB-SubCell"/>
</dbReference>
<dbReference type="GO" id="GO:0004017">
    <property type="term" value="F:adenylate kinase activity"/>
    <property type="evidence" value="ECO:0007669"/>
    <property type="project" value="UniProtKB-UniRule"/>
</dbReference>
<dbReference type="GO" id="GO:0005524">
    <property type="term" value="F:ATP binding"/>
    <property type="evidence" value="ECO:0007669"/>
    <property type="project" value="UniProtKB-KW"/>
</dbReference>
<dbReference type="GO" id="GO:0006172">
    <property type="term" value="P:ADP biosynthetic process"/>
    <property type="evidence" value="ECO:0007669"/>
    <property type="project" value="UniProtKB-UniRule"/>
</dbReference>
<dbReference type="GO" id="GO:0046033">
    <property type="term" value="P:AMP metabolic process"/>
    <property type="evidence" value="ECO:0007669"/>
    <property type="project" value="UniProtKB-UniRule"/>
</dbReference>
<dbReference type="GO" id="GO:0046034">
    <property type="term" value="P:ATP metabolic process"/>
    <property type="evidence" value="ECO:0007669"/>
    <property type="project" value="UniProtKB-UniRule"/>
</dbReference>
<dbReference type="CDD" id="cd01428">
    <property type="entry name" value="ADK"/>
    <property type="match status" value="1"/>
</dbReference>
<dbReference type="FunFam" id="3.40.50.300:FF:000106">
    <property type="entry name" value="Adenylate kinase mitochondrial"/>
    <property type="match status" value="1"/>
</dbReference>
<dbReference type="Gene3D" id="3.40.50.300">
    <property type="entry name" value="P-loop containing nucleotide triphosphate hydrolases"/>
    <property type="match status" value="1"/>
</dbReference>
<dbReference type="HAMAP" id="MF_00235">
    <property type="entry name" value="Adenylate_kinase_Adk"/>
    <property type="match status" value="1"/>
</dbReference>
<dbReference type="HAMAP" id="MF_03168">
    <property type="entry name" value="Adenylate_kinase_AK2"/>
    <property type="match status" value="1"/>
</dbReference>
<dbReference type="InterPro" id="IPR006259">
    <property type="entry name" value="Adenyl_kin_sub"/>
</dbReference>
<dbReference type="InterPro" id="IPR000850">
    <property type="entry name" value="Adenylat/UMP-CMP_kin"/>
</dbReference>
<dbReference type="InterPro" id="IPR033690">
    <property type="entry name" value="Adenylat_kinase_CS"/>
</dbReference>
<dbReference type="InterPro" id="IPR007862">
    <property type="entry name" value="Adenylate_kinase_lid-dom"/>
</dbReference>
<dbReference type="InterPro" id="IPR028587">
    <property type="entry name" value="AK2"/>
</dbReference>
<dbReference type="InterPro" id="IPR027417">
    <property type="entry name" value="P-loop_NTPase"/>
</dbReference>
<dbReference type="NCBIfam" id="TIGR01351">
    <property type="entry name" value="adk"/>
    <property type="match status" value="1"/>
</dbReference>
<dbReference type="NCBIfam" id="NF001380">
    <property type="entry name" value="PRK00279.1-2"/>
    <property type="match status" value="1"/>
</dbReference>
<dbReference type="NCBIfam" id="NF001381">
    <property type="entry name" value="PRK00279.1-3"/>
    <property type="match status" value="1"/>
</dbReference>
<dbReference type="NCBIfam" id="NF011100">
    <property type="entry name" value="PRK14527.1"/>
    <property type="match status" value="1"/>
</dbReference>
<dbReference type="PANTHER" id="PTHR23359">
    <property type="entry name" value="NUCLEOTIDE KINASE"/>
    <property type="match status" value="1"/>
</dbReference>
<dbReference type="Pfam" id="PF00406">
    <property type="entry name" value="ADK"/>
    <property type="match status" value="1"/>
</dbReference>
<dbReference type="Pfam" id="PF05191">
    <property type="entry name" value="ADK_lid"/>
    <property type="match status" value="1"/>
</dbReference>
<dbReference type="PRINTS" id="PR00094">
    <property type="entry name" value="ADENYLTKNASE"/>
</dbReference>
<dbReference type="SUPFAM" id="SSF52540">
    <property type="entry name" value="P-loop containing nucleoside triphosphate hydrolases"/>
    <property type="match status" value="1"/>
</dbReference>
<dbReference type="PROSITE" id="PS00113">
    <property type="entry name" value="ADENYLATE_KINASE"/>
    <property type="match status" value="1"/>
</dbReference>
<gene>
    <name evidence="2" type="primary">Adk2</name>
    <name type="ORF">GF12891</name>
</gene>
<evidence type="ECO:0000250" key="1"/>
<evidence type="ECO:0000255" key="2">
    <source>
        <dbReference type="HAMAP-Rule" id="MF_03168"/>
    </source>
</evidence>
<accession>B3MCQ5</accession>
<organism>
    <name type="scientific">Drosophila ananassae</name>
    <name type="common">Fruit fly</name>
    <dbReference type="NCBI Taxonomy" id="7217"/>
    <lineage>
        <taxon>Eukaryota</taxon>
        <taxon>Metazoa</taxon>
        <taxon>Ecdysozoa</taxon>
        <taxon>Arthropoda</taxon>
        <taxon>Hexapoda</taxon>
        <taxon>Insecta</taxon>
        <taxon>Pterygota</taxon>
        <taxon>Neoptera</taxon>
        <taxon>Endopterygota</taxon>
        <taxon>Diptera</taxon>
        <taxon>Brachycera</taxon>
        <taxon>Muscomorpha</taxon>
        <taxon>Ephydroidea</taxon>
        <taxon>Drosophilidae</taxon>
        <taxon>Drosophila</taxon>
        <taxon>Sophophora</taxon>
    </lineage>
</organism>
<protein>
    <recommendedName>
        <fullName evidence="2">Adenylate kinase</fullName>
        <ecNumber evidence="2">2.7.4.3</ecNumber>
    </recommendedName>
    <alternativeName>
        <fullName evidence="2">ATP-AMP transphosphorylase</fullName>
    </alternativeName>
    <alternativeName>
        <fullName evidence="2">ATP:AMP phosphotransferase</fullName>
    </alternativeName>
    <alternativeName>
        <fullName evidence="2">Adenylate kinase cytosolic and mitochondrial</fullName>
    </alternativeName>
    <alternativeName>
        <fullName evidence="2">Adenylate monophosphate kinase</fullName>
    </alternativeName>
</protein>